<sequence length="310" mass="34193">MEPGNHTAVTKFILLGLTDDPTLCVIFFVFFLGIYIVTLVGNISIINLVRSCPQLQTPMYMFLSHLAFVDIGYSTSVTPIMLIGFIVHETGLPVHACEAQLCSVVTFGTAECFLLAAMAYDRYVAICSPLLYSTHMSSQICLLLVGASYVGGCVNAWTFTGCLLSLSFCGPNKIDHFFCDFSPLLKLSCSDVSIIGIIPSISAGSIIVVTVFVISVSYIYILITILKMRSTEGRHKAFSTCTSHLTAVTLYYGTITFIYVMPKSSYSTKQNRVVSLFYTVVIPMLNPLIYSLRNRDVKEALRKATLRIYS</sequence>
<proteinExistence type="inferred from homology"/>
<gene>
    <name evidence="4" type="primary">Or5p1</name>
    <name evidence="4" type="synonym">Mor204-11</name>
    <name evidence="4" type="synonym">Olfr491</name>
</gene>
<reference key="1">
    <citation type="journal article" date="2002" name="Nat. Neurosci.">
        <title>The olfactory receptor gene superfamily of the mouse.</title>
        <authorList>
            <person name="Zhang X."/>
            <person name="Firestein S."/>
        </authorList>
    </citation>
    <scope>NUCLEOTIDE SEQUENCE [GENOMIC DNA]</scope>
</reference>
<reference key="2">
    <citation type="journal article" date="2002" name="Hum. Mol. Genet.">
        <title>Different evolutionary processes shaped the mouse and human olfactory receptor gene families.</title>
        <authorList>
            <person name="Young J.M."/>
            <person name="Friedman C."/>
            <person name="Williams E.M."/>
            <person name="Ross J.A."/>
            <person name="Tonnes-Priddy L."/>
            <person name="Trask B.J."/>
        </authorList>
    </citation>
    <scope>NUCLEOTIDE SEQUENCE [GENOMIC DNA]</scope>
</reference>
<reference key="3">
    <citation type="journal article" date="2002" name="Hum. Mol. Genet.">
        <authorList>
            <person name="Young J.M."/>
            <person name="Friedman C."/>
            <person name="Williams E.M."/>
            <person name="Ross J.A."/>
            <person name="Tonnes-Priddy L."/>
            <person name="Trask B.J."/>
        </authorList>
    </citation>
    <scope>ERRATUM OF PUBMED:11875048</scope>
</reference>
<accession>Q8VG06</accession>
<organism>
    <name type="scientific">Mus musculus</name>
    <name type="common">Mouse</name>
    <dbReference type="NCBI Taxonomy" id="10090"/>
    <lineage>
        <taxon>Eukaryota</taxon>
        <taxon>Metazoa</taxon>
        <taxon>Chordata</taxon>
        <taxon>Craniata</taxon>
        <taxon>Vertebrata</taxon>
        <taxon>Euteleostomi</taxon>
        <taxon>Mammalia</taxon>
        <taxon>Eutheria</taxon>
        <taxon>Euarchontoglires</taxon>
        <taxon>Glires</taxon>
        <taxon>Rodentia</taxon>
        <taxon>Myomorpha</taxon>
        <taxon>Muroidea</taxon>
        <taxon>Muridae</taxon>
        <taxon>Murinae</taxon>
        <taxon>Mus</taxon>
        <taxon>Mus</taxon>
    </lineage>
</organism>
<feature type="chain" id="PRO_0000150846" description="Olfactory receptor 5P1">
    <location>
        <begin position="1"/>
        <end position="310"/>
    </location>
</feature>
<feature type="topological domain" description="Extracellular" evidence="1">
    <location>
        <begin position="1"/>
        <end position="25"/>
    </location>
</feature>
<feature type="transmembrane region" description="Helical; Name=1" evidence="1">
    <location>
        <begin position="26"/>
        <end position="46"/>
    </location>
</feature>
<feature type="topological domain" description="Cytoplasmic" evidence="1">
    <location>
        <begin position="47"/>
        <end position="54"/>
    </location>
</feature>
<feature type="transmembrane region" description="Helical; Name=2" evidence="1">
    <location>
        <begin position="55"/>
        <end position="75"/>
    </location>
</feature>
<feature type="topological domain" description="Extracellular" evidence="1">
    <location>
        <begin position="76"/>
        <end position="99"/>
    </location>
</feature>
<feature type="transmembrane region" description="Helical; Name=3" evidence="1">
    <location>
        <begin position="100"/>
        <end position="120"/>
    </location>
</feature>
<feature type="topological domain" description="Cytoplasmic" evidence="1">
    <location>
        <begin position="121"/>
        <end position="133"/>
    </location>
</feature>
<feature type="transmembrane region" description="Helical; Name=4" evidence="1">
    <location>
        <begin position="134"/>
        <end position="154"/>
    </location>
</feature>
<feature type="topological domain" description="Extracellular" evidence="1">
    <location>
        <begin position="155"/>
        <end position="196"/>
    </location>
</feature>
<feature type="transmembrane region" description="Helical; Name=5" evidence="1">
    <location>
        <begin position="197"/>
        <end position="217"/>
    </location>
</feature>
<feature type="topological domain" description="Cytoplasmic" evidence="1">
    <location>
        <begin position="218"/>
        <end position="237"/>
    </location>
</feature>
<feature type="transmembrane region" description="Helical; Name=6" evidence="1">
    <location>
        <begin position="238"/>
        <end position="258"/>
    </location>
</feature>
<feature type="topological domain" description="Extracellular" evidence="1">
    <location>
        <begin position="259"/>
        <end position="271"/>
    </location>
</feature>
<feature type="transmembrane region" description="Helical; Name=7" evidence="1">
    <location>
        <begin position="272"/>
        <end position="292"/>
    </location>
</feature>
<feature type="topological domain" description="Cytoplasmic" evidence="1">
    <location>
        <begin position="293"/>
        <end position="310"/>
    </location>
</feature>
<feature type="glycosylation site" description="N-linked (GlcNAc...) asparagine" evidence="1">
    <location>
        <position position="5"/>
    </location>
</feature>
<feature type="disulfide bond" evidence="2">
    <location>
        <begin position="97"/>
        <end position="189"/>
    </location>
</feature>
<evidence type="ECO:0000255" key="1"/>
<evidence type="ECO:0000255" key="2">
    <source>
        <dbReference type="PROSITE-ProRule" id="PRU00521"/>
    </source>
</evidence>
<evidence type="ECO:0000305" key="3"/>
<evidence type="ECO:0000312" key="4">
    <source>
        <dbReference type="MGI" id="MGI:3030325"/>
    </source>
</evidence>
<comment type="function">
    <text>Potential odorant receptor.</text>
</comment>
<comment type="subcellular location">
    <subcellularLocation>
        <location evidence="3">Cell membrane</location>
        <topology evidence="1">Multi-pass membrane protein</topology>
    </subcellularLocation>
</comment>
<comment type="similarity">
    <text evidence="2">Belongs to the G-protein coupled receptor 1 family.</text>
</comment>
<name>OR5P1_MOUSE</name>
<protein>
    <recommendedName>
        <fullName evidence="3">Olfactory receptor 5P1</fullName>
    </recommendedName>
    <alternativeName>
        <fullName>Olfactory receptor 204-11</fullName>
    </alternativeName>
    <alternativeName>
        <fullName>Olfactory receptor 491</fullName>
    </alternativeName>
</protein>
<dbReference type="EMBL" id="AY073359">
    <property type="protein sequence ID" value="AAL61022.1"/>
    <property type="molecule type" value="Genomic_DNA"/>
</dbReference>
<dbReference type="EMBL" id="AY317599">
    <property type="protein sequence ID" value="AAP70994.1"/>
    <property type="molecule type" value="Genomic_DNA"/>
</dbReference>
<dbReference type="CCDS" id="CCDS21711.1"/>
<dbReference type="RefSeq" id="NP_666947.1">
    <property type="nucleotide sequence ID" value="NM_146736.1"/>
</dbReference>
<dbReference type="SMR" id="Q8VG06"/>
<dbReference type="FunCoup" id="Q8VG06">
    <property type="interactions" value="1178"/>
</dbReference>
<dbReference type="STRING" id="10090.ENSMUSP00000150694"/>
<dbReference type="GlyCosmos" id="Q8VG06">
    <property type="glycosylation" value="1 site, No reported glycans"/>
</dbReference>
<dbReference type="GlyGen" id="Q8VG06">
    <property type="glycosylation" value="1 site"/>
</dbReference>
<dbReference type="PaxDb" id="10090-ENSMUSP00000061188"/>
<dbReference type="DNASU" id="258731"/>
<dbReference type="Ensembl" id="ENSMUST00000053179.2">
    <property type="protein sequence ID" value="ENSMUSP00000061188.2"/>
    <property type="gene ID" value="ENSMUSG00000094612.4"/>
</dbReference>
<dbReference type="Ensembl" id="ENSMUST00000209545.3">
    <property type="protein sequence ID" value="ENSMUSP00000148094.2"/>
    <property type="gene ID" value="ENSMUSG00000094612.4"/>
</dbReference>
<dbReference type="Ensembl" id="ENSMUST00000214605.2">
    <property type="protein sequence ID" value="ENSMUSP00000150694.2"/>
    <property type="gene ID" value="ENSMUSG00000094612.4"/>
</dbReference>
<dbReference type="GeneID" id="258731"/>
<dbReference type="KEGG" id="mmu:258731"/>
<dbReference type="UCSC" id="uc009jcf.1">
    <property type="organism name" value="mouse"/>
</dbReference>
<dbReference type="AGR" id="MGI:3030325"/>
<dbReference type="CTD" id="258731"/>
<dbReference type="MGI" id="MGI:3030325">
    <property type="gene designation" value="Or5p1"/>
</dbReference>
<dbReference type="VEuPathDB" id="HostDB:ENSMUSG00000094612"/>
<dbReference type="eggNOG" id="ENOG502SKA1">
    <property type="taxonomic scope" value="Eukaryota"/>
</dbReference>
<dbReference type="GeneTree" id="ENSGT01130000278279"/>
<dbReference type="HOGENOM" id="CLU_012526_1_0_1"/>
<dbReference type="InParanoid" id="Q8VG06"/>
<dbReference type="OMA" id="IPVTGCE"/>
<dbReference type="OrthoDB" id="9598168at2759"/>
<dbReference type="PhylomeDB" id="Q8VG06"/>
<dbReference type="TreeFam" id="TF338848"/>
<dbReference type="BioGRID-ORCS" id="258731">
    <property type="hits" value="1 hit in 70 CRISPR screens"/>
</dbReference>
<dbReference type="PRO" id="PR:Q8VG06"/>
<dbReference type="Proteomes" id="UP000000589">
    <property type="component" value="Chromosome 7"/>
</dbReference>
<dbReference type="RNAct" id="Q8VG06">
    <property type="molecule type" value="protein"/>
</dbReference>
<dbReference type="GO" id="GO:0016020">
    <property type="term" value="C:membrane"/>
    <property type="evidence" value="ECO:0000247"/>
    <property type="project" value="MGI"/>
</dbReference>
<dbReference type="GO" id="GO:0005886">
    <property type="term" value="C:plasma membrane"/>
    <property type="evidence" value="ECO:0007669"/>
    <property type="project" value="UniProtKB-SubCell"/>
</dbReference>
<dbReference type="GO" id="GO:0004930">
    <property type="term" value="F:G protein-coupled receptor activity"/>
    <property type="evidence" value="ECO:0007669"/>
    <property type="project" value="UniProtKB-KW"/>
</dbReference>
<dbReference type="GO" id="GO:0004984">
    <property type="term" value="F:olfactory receptor activity"/>
    <property type="evidence" value="ECO:0000247"/>
    <property type="project" value="MGI"/>
</dbReference>
<dbReference type="GO" id="GO:0007186">
    <property type="term" value="P:G protein-coupled receptor signaling pathway"/>
    <property type="evidence" value="ECO:0000247"/>
    <property type="project" value="MGI"/>
</dbReference>
<dbReference type="GO" id="GO:0007608">
    <property type="term" value="P:sensory perception of smell"/>
    <property type="evidence" value="ECO:0000247"/>
    <property type="project" value="MGI"/>
</dbReference>
<dbReference type="CDD" id="cd15416">
    <property type="entry name" value="7tmA_OR5P-like"/>
    <property type="match status" value="1"/>
</dbReference>
<dbReference type="FunFam" id="1.20.1070.10:FF:000004">
    <property type="entry name" value="Olfactory receptor"/>
    <property type="match status" value="1"/>
</dbReference>
<dbReference type="Gene3D" id="1.20.1070.10">
    <property type="entry name" value="Rhodopsin 7-helix transmembrane proteins"/>
    <property type="match status" value="1"/>
</dbReference>
<dbReference type="InterPro" id="IPR000276">
    <property type="entry name" value="GPCR_Rhodpsn"/>
</dbReference>
<dbReference type="InterPro" id="IPR017452">
    <property type="entry name" value="GPCR_Rhodpsn_7TM"/>
</dbReference>
<dbReference type="InterPro" id="IPR000725">
    <property type="entry name" value="Olfact_rcpt"/>
</dbReference>
<dbReference type="PANTHER" id="PTHR48018">
    <property type="entry name" value="OLFACTORY RECEPTOR"/>
    <property type="match status" value="1"/>
</dbReference>
<dbReference type="Pfam" id="PF13853">
    <property type="entry name" value="7tm_4"/>
    <property type="match status" value="1"/>
</dbReference>
<dbReference type="PRINTS" id="PR00237">
    <property type="entry name" value="GPCRRHODOPSN"/>
</dbReference>
<dbReference type="PRINTS" id="PR00245">
    <property type="entry name" value="OLFACTORYR"/>
</dbReference>
<dbReference type="SUPFAM" id="SSF81321">
    <property type="entry name" value="Family A G protein-coupled receptor-like"/>
    <property type="match status" value="1"/>
</dbReference>
<dbReference type="PROSITE" id="PS00237">
    <property type="entry name" value="G_PROTEIN_RECEP_F1_1"/>
    <property type="match status" value="1"/>
</dbReference>
<dbReference type="PROSITE" id="PS50262">
    <property type="entry name" value="G_PROTEIN_RECEP_F1_2"/>
    <property type="match status" value="1"/>
</dbReference>
<keyword id="KW-1003">Cell membrane</keyword>
<keyword id="KW-1015">Disulfide bond</keyword>
<keyword id="KW-0297">G-protein coupled receptor</keyword>
<keyword id="KW-0325">Glycoprotein</keyword>
<keyword id="KW-0472">Membrane</keyword>
<keyword id="KW-0552">Olfaction</keyword>
<keyword id="KW-0675">Receptor</keyword>
<keyword id="KW-1185">Reference proteome</keyword>
<keyword id="KW-0716">Sensory transduction</keyword>
<keyword id="KW-0807">Transducer</keyword>
<keyword id="KW-0812">Transmembrane</keyword>
<keyword id="KW-1133">Transmembrane helix</keyword>